<comment type="function">
    <text evidence="1">RNaseP catalyzes the removal of the 5'-leader sequence from pre-tRNA to produce the mature 5'-terminus. It can also cleave other RNA substrates such as 4.5S RNA. The protein component plays an auxiliary but essential role in vivo by binding to the 5'-leader sequence and broadening the substrate specificity of the ribozyme.</text>
</comment>
<comment type="catalytic activity">
    <reaction evidence="1">
        <text>Endonucleolytic cleavage of RNA, removing 5'-extranucleotides from tRNA precursor.</text>
        <dbReference type="EC" id="3.1.26.5"/>
    </reaction>
</comment>
<comment type="subunit">
    <text evidence="1">Consists of a catalytic RNA component (M1 or rnpB) and a protein subunit.</text>
</comment>
<comment type="similarity">
    <text evidence="1">Belongs to the RnpA family.</text>
</comment>
<sequence length="119" mass="14102">MKKKYRIKKNDDFQKVFRRGKSFANRQFVVYTLKQEGSNHFRIGLSVSKKIGNAVCRNRIKRYIRQSFHELESQINPENEYIIIARKPAANMDFHEVKKSLIHVLKVGRVLKQKPNNSK</sequence>
<reference key="1">
    <citation type="journal article" date="2001" name="Science">
        <title>Comparative genomics of Listeria species.</title>
        <authorList>
            <person name="Glaser P."/>
            <person name="Frangeul L."/>
            <person name="Buchrieser C."/>
            <person name="Rusniok C."/>
            <person name="Amend A."/>
            <person name="Baquero F."/>
            <person name="Berche P."/>
            <person name="Bloecker H."/>
            <person name="Brandt P."/>
            <person name="Chakraborty T."/>
            <person name="Charbit A."/>
            <person name="Chetouani F."/>
            <person name="Couve E."/>
            <person name="de Daruvar A."/>
            <person name="Dehoux P."/>
            <person name="Domann E."/>
            <person name="Dominguez-Bernal G."/>
            <person name="Duchaud E."/>
            <person name="Durant L."/>
            <person name="Dussurget O."/>
            <person name="Entian K.-D."/>
            <person name="Fsihi H."/>
            <person name="Garcia-del Portillo F."/>
            <person name="Garrido P."/>
            <person name="Gautier L."/>
            <person name="Goebel W."/>
            <person name="Gomez-Lopez N."/>
            <person name="Hain T."/>
            <person name="Hauf J."/>
            <person name="Jackson D."/>
            <person name="Jones L.-M."/>
            <person name="Kaerst U."/>
            <person name="Kreft J."/>
            <person name="Kuhn M."/>
            <person name="Kunst F."/>
            <person name="Kurapkat G."/>
            <person name="Madueno E."/>
            <person name="Maitournam A."/>
            <person name="Mata Vicente J."/>
            <person name="Ng E."/>
            <person name="Nedjari H."/>
            <person name="Nordsiek G."/>
            <person name="Novella S."/>
            <person name="de Pablos B."/>
            <person name="Perez-Diaz J.-C."/>
            <person name="Purcell R."/>
            <person name="Remmel B."/>
            <person name="Rose M."/>
            <person name="Schlueter T."/>
            <person name="Simoes N."/>
            <person name="Tierrez A."/>
            <person name="Vazquez-Boland J.-A."/>
            <person name="Voss H."/>
            <person name="Wehland J."/>
            <person name="Cossart P."/>
        </authorList>
    </citation>
    <scope>NUCLEOTIDE SEQUENCE [LARGE SCALE GENOMIC DNA]</scope>
    <source>
        <strain>ATCC BAA-679 / EGD-e</strain>
    </source>
</reference>
<dbReference type="EC" id="3.1.26.5" evidence="1"/>
<dbReference type="EMBL" id="AL591984">
    <property type="protein sequence ID" value="CAD01068.1"/>
    <property type="molecule type" value="Genomic_DNA"/>
</dbReference>
<dbReference type="PIR" id="AF1431">
    <property type="entry name" value="AF1431"/>
</dbReference>
<dbReference type="RefSeq" id="NP_466377.1">
    <property type="nucleotide sequence ID" value="NC_003210.1"/>
</dbReference>
<dbReference type="RefSeq" id="WP_003723727.1">
    <property type="nucleotide sequence ID" value="NZ_CP149495.1"/>
</dbReference>
<dbReference type="SMR" id="Q8Y3I1"/>
<dbReference type="STRING" id="169963.gene:17595573"/>
<dbReference type="PaxDb" id="169963-lmo2855"/>
<dbReference type="EnsemblBacteria" id="CAD01068">
    <property type="protein sequence ID" value="CAD01068"/>
    <property type="gene ID" value="CAD01068"/>
</dbReference>
<dbReference type="GeneID" id="986374"/>
<dbReference type="KEGG" id="lmo:lmo2855"/>
<dbReference type="PATRIC" id="fig|169963.11.peg.2926"/>
<dbReference type="eggNOG" id="COG0594">
    <property type="taxonomic scope" value="Bacteria"/>
</dbReference>
<dbReference type="HOGENOM" id="CLU_117179_9_1_9"/>
<dbReference type="OrthoDB" id="9810867at2"/>
<dbReference type="PhylomeDB" id="Q8Y3I1"/>
<dbReference type="BioCyc" id="LMON169963:LMO2855-MONOMER"/>
<dbReference type="Proteomes" id="UP000000817">
    <property type="component" value="Chromosome"/>
</dbReference>
<dbReference type="GO" id="GO:0030677">
    <property type="term" value="C:ribonuclease P complex"/>
    <property type="evidence" value="ECO:0000318"/>
    <property type="project" value="GO_Central"/>
</dbReference>
<dbReference type="GO" id="GO:0042781">
    <property type="term" value="F:3'-tRNA processing endoribonuclease activity"/>
    <property type="evidence" value="ECO:0000318"/>
    <property type="project" value="GO_Central"/>
</dbReference>
<dbReference type="GO" id="GO:0004526">
    <property type="term" value="F:ribonuclease P activity"/>
    <property type="evidence" value="ECO:0000318"/>
    <property type="project" value="GO_Central"/>
</dbReference>
<dbReference type="GO" id="GO:0000049">
    <property type="term" value="F:tRNA binding"/>
    <property type="evidence" value="ECO:0007669"/>
    <property type="project" value="UniProtKB-UniRule"/>
</dbReference>
<dbReference type="GO" id="GO:0042780">
    <property type="term" value="P:tRNA 3'-end processing"/>
    <property type="evidence" value="ECO:0000318"/>
    <property type="project" value="GO_Central"/>
</dbReference>
<dbReference type="GO" id="GO:0001682">
    <property type="term" value="P:tRNA 5'-leader removal"/>
    <property type="evidence" value="ECO:0007669"/>
    <property type="project" value="UniProtKB-UniRule"/>
</dbReference>
<dbReference type="FunFam" id="3.30.230.10:FF:000021">
    <property type="entry name" value="Ribonuclease P protein component"/>
    <property type="match status" value="1"/>
</dbReference>
<dbReference type="Gene3D" id="3.30.230.10">
    <property type="match status" value="1"/>
</dbReference>
<dbReference type="HAMAP" id="MF_00227">
    <property type="entry name" value="RNase_P"/>
    <property type="match status" value="1"/>
</dbReference>
<dbReference type="InterPro" id="IPR020568">
    <property type="entry name" value="Ribosomal_Su5_D2-typ_SF"/>
</dbReference>
<dbReference type="InterPro" id="IPR014721">
    <property type="entry name" value="Ribsml_uS5_D2-typ_fold_subgr"/>
</dbReference>
<dbReference type="InterPro" id="IPR000100">
    <property type="entry name" value="RNase_P"/>
</dbReference>
<dbReference type="InterPro" id="IPR020539">
    <property type="entry name" value="RNase_P_CS"/>
</dbReference>
<dbReference type="NCBIfam" id="TIGR00188">
    <property type="entry name" value="rnpA"/>
    <property type="match status" value="1"/>
</dbReference>
<dbReference type="PANTHER" id="PTHR33992">
    <property type="entry name" value="RIBONUCLEASE P PROTEIN COMPONENT"/>
    <property type="match status" value="1"/>
</dbReference>
<dbReference type="PANTHER" id="PTHR33992:SF1">
    <property type="entry name" value="RIBONUCLEASE P PROTEIN COMPONENT"/>
    <property type="match status" value="1"/>
</dbReference>
<dbReference type="Pfam" id="PF00825">
    <property type="entry name" value="Ribonuclease_P"/>
    <property type="match status" value="1"/>
</dbReference>
<dbReference type="SUPFAM" id="SSF54211">
    <property type="entry name" value="Ribosomal protein S5 domain 2-like"/>
    <property type="match status" value="1"/>
</dbReference>
<dbReference type="PROSITE" id="PS00648">
    <property type="entry name" value="RIBONUCLEASE_P"/>
    <property type="match status" value="1"/>
</dbReference>
<protein>
    <recommendedName>
        <fullName evidence="1">Ribonuclease P protein component</fullName>
        <shortName evidence="1">RNase P protein</shortName>
        <shortName evidence="1">RNaseP protein</shortName>
        <ecNumber evidence="1">3.1.26.5</ecNumber>
    </recommendedName>
    <alternativeName>
        <fullName evidence="1">Protein C5</fullName>
    </alternativeName>
</protein>
<keyword id="KW-0255">Endonuclease</keyword>
<keyword id="KW-0378">Hydrolase</keyword>
<keyword id="KW-0540">Nuclease</keyword>
<keyword id="KW-1185">Reference proteome</keyword>
<keyword id="KW-0694">RNA-binding</keyword>
<keyword id="KW-0819">tRNA processing</keyword>
<organism>
    <name type="scientific">Listeria monocytogenes serovar 1/2a (strain ATCC BAA-679 / EGD-e)</name>
    <dbReference type="NCBI Taxonomy" id="169963"/>
    <lineage>
        <taxon>Bacteria</taxon>
        <taxon>Bacillati</taxon>
        <taxon>Bacillota</taxon>
        <taxon>Bacilli</taxon>
        <taxon>Bacillales</taxon>
        <taxon>Listeriaceae</taxon>
        <taxon>Listeria</taxon>
    </lineage>
</organism>
<evidence type="ECO:0000255" key="1">
    <source>
        <dbReference type="HAMAP-Rule" id="MF_00227"/>
    </source>
</evidence>
<gene>
    <name evidence="1" type="primary">rnpA</name>
    <name type="ordered locus">lmo2855</name>
</gene>
<proteinExistence type="inferred from homology"/>
<name>RNPA_LISMO</name>
<accession>Q8Y3I1</accession>
<feature type="chain" id="PRO_0000198480" description="Ribonuclease P protein component">
    <location>
        <begin position="1"/>
        <end position="119"/>
    </location>
</feature>